<gene>
    <name type="primary">JZTHR7</name>
</gene>
<evidence type="ECO:0000250" key="1"/>
<evidence type="ECO:0000255" key="2"/>
<evidence type="ECO:0000255" key="3">
    <source>
        <dbReference type="PROSITE-ProRule" id="PRU00274"/>
    </source>
</evidence>
<accession>Q9YGI6</accession>
<dbReference type="EC" id="3.4.21.-"/>
<dbReference type="EMBL" id="AJ006472">
    <property type="protein sequence ID" value="CAA07055.1"/>
    <property type="molecule type" value="mRNA"/>
</dbReference>
<dbReference type="SMR" id="Q9YGI6"/>
<dbReference type="MEROPS" id="S01.332"/>
<dbReference type="GlyCosmos" id="Q9YGI6">
    <property type="glycosylation" value="1 site, No reported glycans"/>
</dbReference>
<dbReference type="GO" id="GO:0005576">
    <property type="term" value="C:extracellular region"/>
    <property type="evidence" value="ECO:0007669"/>
    <property type="project" value="UniProtKB-SubCell"/>
</dbReference>
<dbReference type="GO" id="GO:0030141">
    <property type="term" value="C:secretory granule"/>
    <property type="evidence" value="ECO:0007669"/>
    <property type="project" value="TreeGrafter"/>
</dbReference>
<dbReference type="GO" id="GO:0004252">
    <property type="term" value="F:serine-type endopeptidase activity"/>
    <property type="evidence" value="ECO:0007669"/>
    <property type="project" value="InterPro"/>
</dbReference>
<dbReference type="GO" id="GO:0090729">
    <property type="term" value="F:toxin activity"/>
    <property type="evidence" value="ECO:0007669"/>
    <property type="project" value="UniProtKB-KW"/>
</dbReference>
<dbReference type="GO" id="GO:0006508">
    <property type="term" value="P:proteolysis"/>
    <property type="evidence" value="ECO:0007669"/>
    <property type="project" value="UniProtKB-KW"/>
</dbReference>
<dbReference type="CDD" id="cd00190">
    <property type="entry name" value="Tryp_SPc"/>
    <property type="match status" value="1"/>
</dbReference>
<dbReference type="FunFam" id="2.40.10.10:FF:000158">
    <property type="entry name" value="Thrombin-like enzyme saxthrombin"/>
    <property type="match status" value="1"/>
</dbReference>
<dbReference type="FunFam" id="2.40.10.10:FF:000153">
    <property type="entry name" value="Venom plasminogen activator TSV-PA"/>
    <property type="match status" value="1"/>
</dbReference>
<dbReference type="Gene3D" id="2.40.10.10">
    <property type="entry name" value="Trypsin-like serine proteases"/>
    <property type="match status" value="2"/>
</dbReference>
<dbReference type="InterPro" id="IPR009003">
    <property type="entry name" value="Peptidase_S1_PA"/>
</dbReference>
<dbReference type="InterPro" id="IPR043504">
    <property type="entry name" value="Peptidase_S1_PA_chymotrypsin"/>
</dbReference>
<dbReference type="InterPro" id="IPR001314">
    <property type="entry name" value="Peptidase_S1A"/>
</dbReference>
<dbReference type="InterPro" id="IPR001254">
    <property type="entry name" value="Trypsin_dom"/>
</dbReference>
<dbReference type="InterPro" id="IPR018114">
    <property type="entry name" value="TRYPSIN_HIS"/>
</dbReference>
<dbReference type="InterPro" id="IPR033116">
    <property type="entry name" value="TRYPSIN_SER"/>
</dbReference>
<dbReference type="PANTHER" id="PTHR24271:SF47">
    <property type="entry name" value="KALLIKREIN-1"/>
    <property type="match status" value="1"/>
</dbReference>
<dbReference type="PANTHER" id="PTHR24271">
    <property type="entry name" value="KALLIKREIN-RELATED"/>
    <property type="match status" value="1"/>
</dbReference>
<dbReference type="Pfam" id="PF00089">
    <property type="entry name" value="Trypsin"/>
    <property type="match status" value="1"/>
</dbReference>
<dbReference type="PRINTS" id="PR00722">
    <property type="entry name" value="CHYMOTRYPSIN"/>
</dbReference>
<dbReference type="SMART" id="SM00020">
    <property type="entry name" value="Tryp_SPc"/>
    <property type="match status" value="1"/>
</dbReference>
<dbReference type="SUPFAM" id="SSF50494">
    <property type="entry name" value="Trypsin-like serine proteases"/>
    <property type="match status" value="1"/>
</dbReference>
<dbReference type="PROSITE" id="PS50240">
    <property type="entry name" value="TRYPSIN_DOM"/>
    <property type="match status" value="1"/>
</dbReference>
<dbReference type="PROSITE" id="PS00134">
    <property type="entry name" value="TRYPSIN_HIS"/>
    <property type="match status" value="1"/>
</dbReference>
<dbReference type="PROSITE" id="PS00135">
    <property type="entry name" value="TRYPSIN_SER"/>
    <property type="match status" value="1"/>
</dbReference>
<comment type="function">
    <text evidence="1">Snake venom serine protease that may act in the hemostasis system of the prey.</text>
</comment>
<comment type="subunit">
    <text evidence="1">Monomer.</text>
</comment>
<comment type="subcellular location">
    <subcellularLocation>
        <location>Secreted</location>
    </subcellularLocation>
</comment>
<comment type="tissue specificity">
    <text>Expressed by the venom gland.</text>
</comment>
<comment type="similarity">
    <text evidence="3">Belongs to the peptidase S1 family. Snake venom subfamily.</text>
</comment>
<feature type="signal peptide" evidence="1">
    <location>
        <begin position="1"/>
        <end position="18"/>
    </location>
</feature>
<feature type="propeptide" id="PRO_0000028375" evidence="1">
    <location>
        <begin position="19"/>
        <end position="24"/>
    </location>
</feature>
<feature type="chain" id="PRO_0000028376" description="Snake venom serine protease pallabin-2">
    <location>
        <begin position="25"/>
        <end position="260"/>
    </location>
</feature>
<feature type="domain" description="Peptidase S1" evidence="3">
    <location>
        <begin position="25"/>
        <end position="251"/>
    </location>
</feature>
<feature type="active site" description="Charge relay system" evidence="1">
    <location>
        <position position="65"/>
    </location>
</feature>
<feature type="active site" description="Charge relay system" evidence="1">
    <location>
        <position position="110"/>
    </location>
</feature>
<feature type="active site" description="Charge relay system" evidence="1">
    <location>
        <position position="206"/>
    </location>
</feature>
<feature type="glycosylation site" description="N-linked (GlcNAc...) asparagine" evidence="2">
    <location>
        <position position="103"/>
    </location>
</feature>
<feature type="disulfide bond" evidence="3">
    <location>
        <begin position="31"/>
        <end position="163"/>
    </location>
</feature>
<feature type="disulfide bond" evidence="3">
    <location>
        <begin position="50"/>
        <end position="66"/>
    </location>
</feature>
<feature type="disulfide bond" evidence="3">
    <location>
        <begin position="98"/>
        <end position="258"/>
    </location>
</feature>
<feature type="disulfide bond" evidence="3">
    <location>
        <begin position="142"/>
        <end position="212"/>
    </location>
</feature>
<feature type="disulfide bond" evidence="3">
    <location>
        <begin position="174"/>
        <end position="191"/>
    </location>
</feature>
<feature type="disulfide bond" evidence="3">
    <location>
        <begin position="202"/>
        <end position="227"/>
    </location>
</feature>
<reference key="1">
    <citation type="journal article" date="1999" name="Biochem. Mol. Biol. Int.">
        <title>Cloning, sequence analysis and expression in E. coli of the cDNA of thrombin like enzyme (pallabin) from Agkistrodon halys pallas.</title>
        <authorList>
            <person name="Fan C."/>
            <person name="Qian Y."/>
            <person name="Gong Y."/>
            <person name="Yang S."/>
        </authorList>
    </citation>
    <scope>NUCLEOTIDE SEQUENCE [MRNA]</scope>
    <source>
        <tissue>Venom gland</tissue>
    </source>
</reference>
<protein>
    <recommendedName>
        <fullName>Snake venom serine protease pallabin-2</fullName>
        <shortName>SVSP</shortName>
        <ecNumber>3.4.21.-</ecNumber>
    </recommendedName>
</protein>
<proteinExistence type="evidence at transcript level"/>
<keyword id="KW-1015">Disulfide bond</keyword>
<keyword id="KW-0325">Glycoprotein</keyword>
<keyword id="KW-1199">Hemostasis impairing toxin</keyword>
<keyword id="KW-0378">Hydrolase</keyword>
<keyword id="KW-0645">Protease</keyword>
<keyword id="KW-0964">Secreted</keyword>
<keyword id="KW-0720">Serine protease</keyword>
<keyword id="KW-0732">Signal</keyword>
<keyword id="KW-0800">Toxin</keyword>
<keyword id="KW-0865">Zymogen</keyword>
<organism>
    <name type="scientific">Gloydius halys</name>
    <name type="common">Chinese water mocassin</name>
    <name type="synonym">Agkistrodon halys</name>
    <dbReference type="NCBI Taxonomy" id="8714"/>
    <lineage>
        <taxon>Eukaryota</taxon>
        <taxon>Metazoa</taxon>
        <taxon>Chordata</taxon>
        <taxon>Craniata</taxon>
        <taxon>Vertebrata</taxon>
        <taxon>Euteleostomi</taxon>
        <taxon>Lepidosauria</taxon>
        <taxon>Squamata</taxon>
        <taxon>Bifurcata</taxon>
        <taxon>Unidentata</taxon>
        <taxon>Episquamata</taxon>
        <taxon>Toxicofera</taxon>
        <taxon>Serpentes</taxon>
        <taxon>Colubroidea</taxon>
        <taxon>Viperidae</taxon>
        <taxon>Crotalinae</taxon>
        <taxon>Gloydius</taxon>
    </lineage>
</organism>
<sequence>MVLIKVLANLLILQLSYAQKSSELIIGGDECNINEHRFLVALYTSRTLFCGGTLINQEWVLTAAHCNMEDIQIKLGMHSKKVPNEDEQKRVPKEKFFCLSSKNYTLWDKDIMLIRLDSPVKNSAHIAPLSLPSSPPSVGSVCRTMGWGRISSTKETYPDVPHCVNINLLEYEMCRAPYPEFELPATSRTLCAGILEGGKDTCVGDSGGPLICNGQFQGIASWGDDPCAQPHKPAAYTKVFDHLDWIENIIAGNTDASCPP</sequence>
<name>VSP2_GLOHA</name>